<keyword id="KW-0479">Metal-binding</keyword>
<keyword id="KW-1185">Reference proteome</keyword>
<keyword id="KW-0687">Ribonucleoprotein</keyword>
<keyword id="KW-0689">Ribosomal protein</keyword>
<keyword id="KW-0694">RNA-binding</keyword>
<keyword id="KW-0699">rRNA-binding</keyword>
<keyword id="KW-0862">Zinc</keyword>
<sequence>MKAGIHPDYAEITATCTCGNVIKINSTVGKDLHLDVCGACHPFYTGTQKVMDTGGRIDKFNKRFGALGKK</sequence>
<evidence type="ECO:0000255" key="1">
    <source>
        <dbReference type="HAMAP-Rule" id="MF_00501"/>
    </source>
</evidence>
<evidence type="ECO:0000305" key="2"/>
<comment type="function">
    <text evidence="1">Binds the 23S rRNA.</text>
</comment>
<comment type="cofactor">
    <cofactor evidence="1">
        <name>Zn(2+)</name>
        <dbReference type="ChEBI" id="CHEBI:29105"/>
    </cofactor>
    <text evidence="1">Binds 1 zinc ion per subunit.</text>
</comment>
<comment type="subunit">
    <text evidence="1">Part of the 50S ribosomal subunit.</text>
</comment>
<comment type="similarity">
    <text evidence="1">Belongs to the bacterial ribosomal protein bL31 family. Type A subfamily.</text>
</comment>
<feature type="chain" id="PRO_1000126734" description="Large ribosomal subunit protein bL31">
    <location>
        <begin position="1"/>
        <end position="70"/>
    </location>
</feature>
<feature type="binding site" evidence="1">
    <location>
        <position position="16"/>
    </location>
    <ligand>
        <name>Zn(2+)</name>
        <dbReference type="ChEBI" id="CHEBI:29105"/>
    </ligand>
</feature>
<feature type="binding site" evidence="1">
    <location>
        <position position="18"/>
    </location>
    <ligand>
        <name>Zn(2+)</name>
        <dbReference type="ChEBI" id="CHEBI:29105"/>
    </ligand>
</feature>
<feature type="binding site" evidence="1">
    <location>
        <position position="37"/>
    </location>
    <ligand>
        <name>Zn(2+)</name>
        <dbReference type="ChEBI" id="CHEBI:29105"/>
    </ligand>
</feature>
<feature type="binding site" evidence="1">
    <location>
        <position position="40"/>
    </location>
    <ligand>
        <name>Zn(2+)</name>
        <dbReference type="ChEBI" id="CHEBI:29105"/>
    </ligand>
</feature>
<organism>
    <name type="scientific">Shewanella pealeana (strain ATCC 700345 / ANG-SQ1)</name>
    <dbReference type="NCBI Taxonomy" id="398579"/>
    <lineage>
        <taxon>Bacteria</taxon>
        <taxon>Pseudomonadati</taxon>
        <taxon>Pseudomonadota</taxon>
        <taxon>Gammaproteobacteria</taxon>
        <taxon>Alteromonadales</taxon>
        <taxon>Shewanellaceae</taxon>
        <taxon>Shewanella</taxon>
    </lineage>
</organism>
<name>RL31_SHEPA</name>
<gene>
    <name evidence="1" type="primary">rpmE</name>
    <name type="ordered locus">Spea_3776</name>
</gene>
<proteinExistence type="inferred from homology"/>
<accession>A8H950</accession>
<dbReference type="EMBL" id="CP000851">
    <property type="protein sequence ID" value="ABV89087.1"/>
    <property type="molecule type" value="Genomic_DNA"/>
</dbReference>
<dbReference type="RefSeq" id="WP_012156969.1">
    <property type="nucleotide sequence ID" value="NC_009901.1"/>
</dbReference>
<dbReference type="SMR" id="A8H950"/>
<dbReference type="STRING" id="398579.Spea_3776"/>
<dbReference type="KEGG" id="spl:Spea_3776"/>
<dbReference type="eggNOG" id="COG0254">
    <property type="taxonomic scope" value="Bacteria"/>
</dbReference>
<dbReference type="HOGENOM" id="CLU_114306_4_3_6"/>
<dbReference type="OrthoDB" id="9803251at2"/>
<dbReference type="Proteomes" id="UP000002608">
    <property type="component" value="Chromosome"/>
</dbReference>
<dbReference type="GO" id="GO:1990904">
    <property type="term" value="C:ribonucleoprotein complex"/>
    <property type="evidence" value="ECO:0007669"/>
    <property type="project" value="UniProtKB-KW"/>
</dbReference>
<dbReference type="GO" id="GO:0005840">
    <property type="term" value="C:ribosome"/>
    <property type="evidence" value="ECO:0007669"/>
    <property type="project" value="UniProtKB-KW"/>
</dbReference>
<dbReference type="GO" id="GO:0046872">
    <property type="term" value="F:metal ion binding"/>
    <property type="evidence" value="ECO:0007669"/>
    <property type="project" value="UniProtKB-KW"/>
</dbReference>
<dbReference type="GO" id="GO:0019843">
    <property type="term" value="F:rRNA binding"/>
    <property type="evidence" value="ECO:0007669"/>
    <property type="project" value="UniProtKB-KW"/>
</dbReference>
<dbReference type="GO" id="GO:0003735">
    <property type="term" value="F:structural constituent of ribosome"/>
    <property type="evidence" value="ECO:0007669"/>
    <property type="project" value="InterPro"/>
</dbReference>
<dbReference type="GO" id="GO:0006412">
    <property type="term" value="P:translation"/>
    <property type="evidence" value="ECO:0007669"/>
    <property type="project" value="UniProtKB-UniRule"/>
</dbReference>
<dbReference type="Gene3D" id="4.10.830.30">
    <property type="entry name" value="Ribosomal protein L31"/>
    <property type="match status" value="1"/>
</dbReference>
<dbReference type="HAMAP" id="MF_00501">
    <property type="entry name" value="Ribosomal_bL31_1"/>
    <property type="match status" value="1"/>
</dbReference>
<dbReference type="InterPro" id="IPR034704">
    <property type="entry name" value="Ribosomal_bL28/bL31-like_sf"/>
</dbReference>
<dbReference type="InterPro" id="IPR002150">
    <property type="entry name" value="Ribosomal_bL31"/>
</dbReference>
<dbReference type="InterPro" id="IPR027491">
    <property type="entry name" value="Ribosomal_bL31_A"/>
</dbReference>
<dbReference type="InterPro" id="IPR042105">
    <property type="entry name" value="Ribosomal_bL31_sf"/>
</dbReference>
<dbReference type="NCBIfam" id="TIGR00105">
    <property type="entry name" value="L31"/>
    <property type="match status" value="1"/>
</dbReference>
<dbReference type="NCBIfam" id="NF000612">
    <property type="entry name" value="PRK00019.1"/>
    <property type="match status" value="1"/>
</dbReference>
<dbReference type="NCBIfam" id="NF001809">
    <property type="entry name" value="PRK00528.1"/>
    <property type="match status" value="1"/>
</dbReference>
<dbReference type="PANTHER" id="PTHR33280">
    <property type="entry name" value="50S RIBOSOMAL PROTEIN L31, CHLOROPLASTIC"/>
    <property type="match status" value="1"/>
</dbReference>
<dbReference type="PANTHER" id="PTHR33280:SF6">
    <property type="entry name" value="LARGE RIBOSOMAL SUBUNIT PROTEIN BL31A"/>
    <property type="match status" value="1"/>
</dbReference>
<dbReference type="Pfam" id="PF01197">
    <property type="entry name" value="Ribosomal_L31"/>
    <property type="match status" value="1"/>
</dbReference>
<dbReference type="PRINTS" id="PR01249">
    <property type="entry name" value="RIBOSOMALL31"/>
</dbReference>
<dbReference type="SUPFAM" id="SSF143800">
    <property type="entry name" value="L28p-like"/>
    <property type="match status" value="1"/>
</dbReference>
<dbReference type="PROSITE" id="PS01143">
    <property type="entry name" value="RIBOSOMAL_L31"/>
    <property type="match status" value="1"/>
</dbReference>
<reference key="1">
    <citation type="submission" date="2007-10" db="EMBL/GenBank/DDBJ databases">
        <title>Complete sequence of Shewanella pealeana ATCC 700345.</title>
        <authorList>
            <consortium name="US DOE Joint Genome Institute"/>
            <person name="Copeland A."/>
            <person name="Lucas S."/>
            <person name="Lapidus A."/>
            <person name="Barry K."/>
            <person name="Glavina del Rio T."/>
            <person name="Dalin E."/>
            <person name="Tice H."/>
            <person name="Pitluck S."/>
            <person name="Chertkov O."/>
            <person name="Brettin T."/>
            <person name="Bruce D."/>
            <person name="Detter J.C."/>
            <person name="Han C."/>
            <person name="Schmutz J."/>
            <person name="Larimer F."/>
            <person name="Land M."/>
            <person name="Hauser L."/>
            <person name="Kyrpides N."/>
            <person name="Kim E."/>
            <person name="Zhao J.-S.Z."/>
            <person name="Manno D."/>
            <person name="Hawari J."/>
            <person name="Richardson P."/>
        </authorList>
    </citation>
    <scope>NUCLEOTIDE SEQUENCE [LARGE SCALE GENOMIC DNA]</scope>
    <source>
        <strain>ATCC 700345 / ANG-SQ1</strain>
    </source>
</reference>
<protein>
    <recommendedName>
        <fullName evidence="1">Large ribosomal subunit protein bL31</fullName>
    </recommendedName>
    <alternativeName>
        <fullName evidence="2">50S ribosomal protein L31</fullName>
    </alternativeName>
</protein>